<protein>
    <recommendedName>
        <fullName evidence="1">Adenylate kinase</fullName>
        <shortName evidence="1">AK</shortName>
        <ecNumber evidence="1">2.7.4.3</ecNumber>
    </recommendedName>
    <alternativeName>
        <fullName evidence="1">ATP-AMP transphosphorylase</fullName>
    </alternativeName>
    <alternativeName>
        <fullName evidence="1">ATP:AMP phosphotransferase</fullName>
    </alternativeName>
    <alternativeName>
        <fullName evidence="1">Adenylate monophosphate kinase</fullName>
    </alternativeName>
</protein>
<organism>
    <name type="scientific">Mycobacterium ulcerans (strain Agy99)</name>
    <dbReference type="NCBI Taxonomy" id="362242"/>
    <lineage>
        <taxon>Bacteria</taxon>
        <taxon>Bacillati</taxon>
        <taxon>Actinomycetota</taxon>
        <taxon>Actinomycetes</taxon>
        <taxon>Mycobacteriales</taxon>
        <taxon>Mycobacteriaceae</taxon>
        <taxon>Mycobacterium</taxon>
        <taxon>Mycobacterium ulcerans group</taxon>
    </lineage>
</organism>
<evidence type="ECO:0000255" key="1">
    <source>
        <dbReference type="HAMAP-Rule" id="MF_00235"/>
    </source>
</evidence>
<keyword id="KW-0067">ATP-binding</keyword>
<keyword id="KW-0963">Cytoplasm</keyword>
<keyword id="KW-0418">Kinase</keyword>
<keyword id="KW-0545">Nucleotide biosynthesis</keyword>
<keyword id="KW-0547">Nucleotide-binding</keyword>
<keyword id="KW-0808">Transferase</keyword>
<accession>A0PM98</accession>
<gene>
    <name evidence="1" type="primary">adk</name>
    <name type="ordered locus">MUL_0829</name>
</gene>
<name>KAD_MYCUA</name>
<proteinExistence type="inferred from homology"/>
<feature type="chain" id="PRO_1000058860" description="Adenylate kinase">
    <location>
        <begin position="1"/>
        <end position="181"/>
    </location>
</feature>
<feature type="region of interest" description="NMP" evidence="1">
    <location>
        <begin position="30"/>
        <end position="59"/>
    </location>
</feature>
<feature type="region of interest" description="LID" evidence="1">
    <location>
        <begin position="126"/>
        <end position="132"/>
    </location>
</feature>
<feature type="binding site" evidence="1">
    <location>
        <begin position="10"/>
        <end position="15"/>
    </location>
    <ligand>
        <name>ATP</name>
        <dbReference type="ChEBI" id="CHEBI:30616"/>
    </ligand>
</feature>
<feature type="binding site" evidence="1">
    <location>
        <position position="31"/>
    </location>
    <ligand>
        <name>AMP</name>
        <dbReference type="ChEBI" id="CHEBI:456215"/>
    </ligand>
</feature>
<feature type="binding site" evidence="1">
    <location>
        <position position="36"/>
    </location>
    <ligand>
        <name>AMP</name>
        <dbReference type="ChEBI" id="CHEBI:456215"/>
    </ligand>
</feature>
<feature type="binding site" evidence="1">
    <location>
        <begin position="57"/>
        <end position="59"/>
    </location>
    <ligand>
        <name>AMP</name>
        <dbReference type="ChEBI" id="CHEBI:456215"/>
    </ligand>
</feature>
<feature type="binding site" evidence="1">
    <location>
        <begin position="85"/>
        <end position="88"/>
    </location>
    <ligand>
        <name>AMP</name>
        <dbReference type="ChEBI" id="CHEBI:456215"/>
    </ligand>
</feature>
<feature type="binding site" evidence="1">
    <location>
        <position position="92"/>
    </location>
    <ligand>
        <name>AMP</name>
        <dbReference type="ChEBI" id="CHEBI:456215"/>
    </ligand>
</feature>
<feature type="binding site" evidence="1">
    <location>
        <position position="127"/>
    </location>
    <ligand>
        <name>ATP</name>
        <dbReference type="ChEBI" id="CHEBI:30616"/>
    </ligand>
</feature>
<feature type="binding site" evidence="1">
    <location>
        <position position="129"/>
    </location>
    <ligand>
        <name>AMP</name>
        <dbReference type="ChEBI" id="CHEBI:456215"/>
    </ligand>
</feature>
<feature type="binding site" evidence="1">
    <location>
        <position position="140"/>
    </location>
    <ligand>
        <name>AMP</name>
        <dbReference type="ChEBI" id="CHEBI:456215"/>
    </ligand>
</feature>
<feature type="binding site" evidence="1">
    <location>
        <position position="166"/>
    </location>
    <ligand>
        <name>ATP</name>
        <dbReference type="ChEBI" id="CHEBI:30616"/>
    </ligand>
</feature>
<comment type="function">
    <text evidence="1">Catalyzes the reversible transfer of the terminal phosphate group between ATP and AMP. Plays an important role in cellular energy homeostasis and in adenine nucleotide metabolism.</text>
</comment>
<comment type="catalytic activity">
    <reaction evidence="1">
        <text>AMP + ATP = 2 ADP</text>
        <dbReference type="Rhea" id="RHEA:12973"/>
        <dbReference type="ChEBI" id="CHEBI:30616"/>
        <dbReference type="ChEBI" id="CHEBI:456215"/>
        <dbReference type="ChEBI" id="CHEBI:456216"/>
        <dbReference type="EC" id="2.7.4.3"/>
    </reaction>
</comment>
<comment type="pathway">
    <text evidence="1">Purine metabolism; AMP biosynthesis via salvage pathway; AMP from ADP: step 1/1.</text>
</comment>
<comment type="subunit">
    <text evidence="1">Monomer.</text>
</comment>
<comment type="subcellular location">
    <subcellularLocation>
        <location evidence="1">Cytoplasm</location>
    </subcellularLocation>
</comment>
<comment type="domain">
    <text evidence="1">Consists of three domains, a large central CORE domain and two small peripheral domains, NMPbind and LID, which undergo movements during catalysis. The LID domain closes over the site of phosphoryl transfer upon ATP binding. Assembling and dissambling the active center during each catalytic cycle provides an effective means to prevent ATP hydrolysis.</text>
</comment>
<comment type="similarity">
    <text evidence="1">Belongs to the adenylate kinase family.</text>
</comment>
<dbReference type="EC" id="2.7.4.3" evidence="1"/>
<dbReference type="EMBL" id="CP000325">
    <property type="protein sequence ID" value="ABL03467.1"/>
    <property type="molecule type" value="Genomic_DNA"/>
</dbReference>
<dbReference type="RefSeq" id="WP_011739092.1">
    <property type="nucleotide sequence ID" value="NC_008611.1"/>
</dbReference>
<dbReference type="SMR" id="A0PM98"/>
<dbReference type="KEGG" id="mul:MUL_0829"/>
<dbReference type="eggNOG" id="COG0563">
    <property type="taxonomic scope" value="Bacteria"/>
</dbReference>
<dbReference type="HOGENOM" id="CLU_032354_4_1_11"/>
<dbReference type="UniPathway" id="UPA00588">
    <property type="reaction ID" value="UER00649"/>
</dbReference>
<dbReference type="Proteomes" id="UP000000765">
    <property type="component" value="Chromosome"/>
</dbReference>
<dbReference type="GO" id="GO:0005737">
    <property type="term" value="C:cytoplasm"/>
    <property type="evidence" value="ECO:0007669"/>
    <property type="project" value="UniProtKB-SubCell"/>
</dbReference>
<dbReference type="GO" id="GO:0004017">
    <property type="term" value="F:adenylate kinase activity"/>
    <property type="evidence" value="ECO:0007669"/>
    <property type="project" value="UniProtKB-UniRule"/>
</dbReference>
<dbReference type="GO" id="GO:0005524">
    <property type="term" value="F:ATP binding"/>
    <property type="evidence" value="ECO:0007669"/>
    <property type="project" value="UniProtKB-UniRule"/>
</dbReference>
<dbReference type="GO" id="GO:0044209">
    <property type="term" value="P:AMP salvage"/>
    <property type="evidence" value="ECO:0007669"/>
    <property type="project" value="UniProtKB-UniRule"/>
</dbReference>
<dbReference type="CDD" id="cd01428">
    <property type="entry name" value="ADK"/>
    <property type="match status" value="1"/>
</dbReference>
<dbReference type="Gene3D" id="3.40.50.300">
    <property type="entry name" value="P-loop containing nucleotide triphosphate hydrolases"/>
    <property type="match status" value="1"/>
</dbReference>
<dbReference type="HAMAP" id="MF_00235">
    <property type="entry name" value="Adenylate_kinase_Adk"/>
    <property type="match status" value="1"/>
</dbReference>
<dbReference type="InterPro" id="IPR000850">
    <property type="entry name" value="Adenylat/UMP-CMP_kin"/>
</dbReference>
<dbReference type="InterPro" id="IPR033690">
    <property type="entry name" value="Adenylat_kinase_CS"/>
</dbReference>
<dbReference type="InterPro" id="IPR027417">
    <property type="entry name" value="P-loop_NTPase"/>
</dbReference>
<dbReference type="NCBIfam" id="NF001381">
    <property type="entry name" value="PRK00279.1-3"/>
    <property type="match status" value="1"/>
</dbReference>
<dbReference type="NCBIfam" id="NF011100">
    <property type="entry name" value="PRK14527.1"/>
    <property type="match status" value="1"/>
</dbReference>
<dbReference type="NCBIfam" id="NF011105">
    <property type="entry name" value="PRK14532.1"/>
    <property type="match status" value="1"/>
</dbReference>
<dbReference type="PANTHER" id="PTHR23359">
    <property type="entry name" value="NUCLEOTIDE KINASE"/>
    <property type="match status" value="1"/>
</dbReference>
<dbReference type="Pfam" id="PF00406">
    <property type="entry name" value="ADK"/>
    <property type="match status" value="1"/>
</dbReference>
<dbReference type="PRINTS" id="PR00094">
    <property type="entry name" value="ADENYLTKNASE"/>
</dbReference>
<dbReference type="SUPFAM" id="SSF52540">
    <property type="entry name" value="P-loop containing nucleoside triphosphate hydrolases"/>
    <property type="match status" value="1"/>
</dbReference>
<dbReference type="PROSITE" id="PS00113">
    <property type="entry name" value="ADENYLATE_KINASE"/>
    <property type="match status" value="1"/>
</dbReference>
<sequence>MRVVLLGPPGAGKGTQAQKLAEKLGIPQISTGELFRKNIQDGTKLGVEAKRYLDAGDLVPSDLTNQLVDDRLDQPDTAAGFILDGYPRSVEQAKALHEMLRRRDTDIDAVLEFRVSQDELLQRLKGRGRADDTDEVILNRMKVYRDETAPLLEFYDTEVKTVDAIGTLDEVFARALQALGK</sequence>
<reference key="1">
    <citation type="journal article" date="2007" name="Genome Res.">
        <title>Reductive evolution and niche adaptation inferred from the genome of Mycobacterium ulcerans, the causative agent of Buruli ulcer.</title>
        <authorList>
            <person name="Stinear T.P."/>
            <person name="Seemann T."/>
            <person name="Pidot S."/>
            <person name="Frigui W."/>
            <person name="Reysset G."/>
            <person name="Garnier T."/>
            <person name="Meurice G."/>
            <person name="Simon D."/>
            <person name="Bouchier C."/>
            <person name="Ma L."/>
            <person name="Tichit M."/>
            <person name="Porter J.L."/>
            <person name="Ryan J."/>
            <person name="Johnson P.D.R."/>
            <person name="Davies J.K."/>
            <person name="Jenkin G.A."/>
            <person name="Small P.L.C."/>
            <person name="Jones L.M."/>
            <person name="Tekaia F."/>
            <person name="Laval F."/>
            <person name="Daffe M."/>
            <person name="Parkhill J."/>
            <person name="Cole S.T."/>
        </authorList>
    </citation>
    <scope>NUCLEOTIDE SEQUENCE [LARGE SCALE GENOMIC DNA]</scope>
    <source>
        <strain>Agy99</strain>
    </source>
</reference>